<evidence type="ECO:0000250" key="1"/>
<evidence type="ECO:0000305" key="2"/>
<keyword id="KW-0150">Chloroplast</keyword>
<keyword id="KW-0934">Plastid</keyword>
<keyword id="KW-0687">Ribonucleoprotein</keyword>
<keyword id="KW-0689">Ribosomal protein</keyword>
<keyword id="KW-0694">RNA-binding</keyword>
<keyword id="KW-0699">rRNA-binding</keyword>
<comment type="function">
    <text evidence="1">One of the primary rRNA binding proteins, it binds directly to 16S rRNA central domain where it helps coordinate assembly of the platform of the 30S subunit.</text>
</comment>
<comment type="subunit">
    <text evidence="1">Part of the 30S ribosomal subunit.</text>
</comment>
<comment type="subcellular location">
    <subcellularLocation>
        <location>Plastid</location>
        <location>Chloroplast</location>
    </subcellularLocation>
</comment>
<comment type="similarity">
    <text evidence="2">Belongs to the universal ribosomal protein uS8 family.</text>
</comment>
<geneLocation type="chloroplast"/>
<dbReference type="EMBL" id="X99495">
    <property type="protein sequence ID" value="CAA67852.1"/>
    <property type="molecule type" value="Genomic_DNA"/>
</dbReference>
<dbReference type="SMR" id="Q42362"/>
<dbReference type="GO" id="GO:0009507">
    <property type="term" value="C:chloroplast"/>
    <property type="evidence" value="ECO:0007669"/>
    <property type="project" value="UniProtKB-SubCell"/>
</dbReference>
<dbReference type="GO" id="GO:1990904">
    <property type="term" value="C:ribonucleoprotein complex"/>
    <property type="evidence" value="ECO:0007669"/>
    <property type="project" value="UniProtKB-KW"/>
</dbReference>
<dbReference type="GO" id="GO:0005840">
    <property type="term" value="C:ribosome"/>
    <property type="evidence" value="ECO:0007669"/>
    <property type="project" value="UniProtKB-KW"/>
</dbReference>
<dbReference type="GO" id="GO:0019843">
    <property type="term" value="F:rRNA binding"/>
    <property type="evidence" value="ECO:0007669"/>
    <property type="project" value="UniProtKB-KW"/>
</dbReference>
<dbReference type="GO" id="GO:0003735">
    <property type="term" value="F:structural constituent of ribosome"/>
    <property type="evidence" value="ECO:0007669"/>
    <property type="project" value="InterPro"/>
</dbReference>
<dbReference type="GO" id="GO:0006412">
    <property type="term" value="P:translation"/>
    <property type="evidence" value="ECO:0007669"/>
    <property type="project" value="InterPro"/>
</dbReference>
<dbReference type="FunFam" id="3.30.1490.10:FF:000001">
    <property type="entry name" value="30S ribosomal protein S8"/>
    <property type="match status" value="1"/>
</dbReference>
<dbReference type="FunFam" id="3.30.1370.30:FF:000004">
    <property type="entry name" value="30S ribosomal protein S8, chloroplastic"/>
    <property type="match status" value="1"/>
</dbReference>
<dbReference type="Gene3D" id="3.30.1370.30">
    <property type="match status" value="1"/>
</dbReference>
<dbReference type="Gene3D" id="3.30.1490.10">
    <property type="match status" value="1"/>
</dbReference>
<dbReference type="InterPro" id="IPR000630">
    <property type="entry name" value="Ribosomal_uS8"/>
</dbReference>
<dbReference type="InterPro" id="IPR035987">
    <property type="entry name" value="Ribosomal_uS8_sf"/>
</dbReference>
<dbReference type="PANTHER" id="PTHR11758">
    <property type="entry name" value="40S RIBOSOMAL PROTEIN S15A"/>
    <property type="match status" value="1"/>
</dbReference>
<dbReference type="Pfam" id="PF00410">
    <property type="entry name" value="Ribosomal_S8"/>
    <property type="match status" value="1"/>
</dbReference>
<dbReference type="SUPFAM" id="SSF56047">
    <property type="entry name" value="Ribosomal protein S8"/>
    <property type="match status" value="1"/>
</dbReference>
<reference key="1">
    <citation type="submission" date="1996-07" db="EMBL/GenBank/DDBJ databases">
        <title>Genomic structure of the banana chloroplast.</title>
        <authorList>
            <person name="Baurens F.C."/>
            <person name="Lagoda P.J.L."/>
        </authorList>
    </citation>
    <scope>NUCLEOTIDE SEQUENCE [GENOMIC DNA]</scope>
    <source>
        <strain>cv. Madang</strain>
    </source>
</reference>
<proteinExistence type="inferred from homology"/>
<accession>Q42362</accession>
<feature type="chain" id="PRO_0000126578" description="Small ribosomal subunit protein uS8c">
    <location>
        <begin position="1"/>
        <end position="116" status="greater than"/>
    </location>
</feature>
<feature type="non-terminal residue">
    <location>
        <position position="116"/>
    </location>
</feature>
<name>RR8_MUSAC</name>
<protein>
    <recommendedName>
        <fullName evidence="2">Small ribosomal subunit protein uS8c</fullName>
    </recommendedName>
    <alternativeName>
        <fullName>30S ribosomal protein S8, chloroplastic</fullName>
    </alternativeName>
</protein>
<sequence length="116" mass="13464">MGKDTIADIITSIRNADMNKKGTVRIASTNITENIVKILLREGFIENVRKHQEGNKYFLVSTLRHRKTRKRIHRTILKRISRPGLRIYSDYQQIPKILGGIGIVILSTYPRYNDRS</sequence>
<organism>
    <name type="scientific">Musa acuminata</name>
    <name type="common">Banana</name>
    <name type="synonym">Musa cavendishii</name>
    <dbReference type="NCBI Taxonomy" id="4641"/>
    <lineage>
        <taxon>Eukaryota</taxon>
        <taxon>Viridiplantae</taxon>
        <taxon>Streptophyta</taxon>
        <taxon>Embryophyta</taxon>
        <taxon>Tracheophyta</taxon>
        <taxon>Spermatophyta</taxon>
        <taxon>Magnoliopsida</taxon>
        <taxon>Liliopsida</taxon>
        <taxon>Zingiberales</taxon>
        <taxon>Musaceae</taxon>
        <taxon>Musa</taxon>
    </lineage>
</organism>
<gene>
    <name type="primary">rps8</name>
</gene>